<accession>B0K959</accession>
<organism>
    <name type="scientific">Thermoanaerobacter pseudethanolicus (strain ATCC 33223 / 39E)</name>
    <name type="common">Clostridium thermohydrosulfuricum</name>
    <dbReference type="NCBI Taxonomy" id="340099"/>
    <lineage>
        <taxon>Bacteria</taxon>
        <taxon>Bacillati</taxon>
        <taxon>Bacillota</taxon>
        <taxon>Clostridia</taxon>
        <taxon>Thermoanaerobacterales</taxon>
        <taxon>Thermoanaerobacteraceae</taxon>
        <taxon>Thermoanaerobacter</taxon>
    </lineage>
</organism>
<feature type="chain" id="PRO_1000097573" description="Queuine tRNA-ribosyltransferase">
    <location>
        <begin position="1"/>
        <end position="375"/>
    </location>
</feature>
<feature type="region of interest" description="RNA binding" evidence="1">
    <location>
        <begin position="249"/>
        <end position="255"/>
    </location>
</feature>
<feature type="region of interest" description="RNA binding; important for wobble base 34 recognition" evidence="1">
    <location>
        <begin position="273"/>
        <end position="277"/>
    </location>
</feature>
<feature type="active site" description="Proton acceptor" evidence="1">
    <location>
        <position position="94"/>
    </location>
</feature>
<feature type="active site" description="Nucleophile" evidence="1">
    <location>
        <position position="268"/>
    </location>
</feature>
<feature type="binding site" evidence="1">
    <location>
        <begin position="94"/>
        <end position="98"/>
    </location>
    <ligand>
        <name>substrate</name>
    </ligand>
</feature>
<feature type="binding site" evidence="1">
    <location>
        <position position="148"/>
    </location>
    <ligand>
        <name>substrate</name>
    </ligand>
</feature>
<feature type="binding site" evidence="1">
    <location>
        <position position="191"/>
    </location>
    <ligand>
        <name>substrate</name>
    </ligand>
</feature>
<feature type="binding site" evidence="1">
    <location>
        <position position="218"/>
    </location>
    <ligand>
        <name>substrate</name>
    </ligand>
</feature>
<feature type="binding site" evidence="1">
    <location>
        <position position="306"/>
    </location>
    <ligand>
        <name>Zn(2+)</name>
        <dbReference type="ChEBI" id="CHEBI:29105"/>
    </ligand>
</feature>
<feature type="binding site" evidence="1">
    <location>
        <position position="308"/>
    </location>
    <ligand>
        <name>Zn(2+)</name>
        <dbReference type="ChEBI" id="CHEBI:29105"/>
    </ligand>
</feature>
<feature type="binding site" evidence="1">
    <location>
        <position position="311"/>
    </location>
    <ligand>
        <name>Zn(2+)</name>
        <dbReference type="ChEBI" id="CHEBI:29105"/>
    </ligand>
</feature>
<feature type="binding site" evidence="1">
    <location>
        <position position="337"/>
    </location>
    <ligand>
        <name>Zn(2+)</name>
        <dbReference type="ChEBI" id="CHEBI:29105"/>
    </ligand>
</feature>
<comment type="function">
    <text evidence="1">Catalyzes the base-exchange of a guanine (G) residue with the queuine precursor 7-aminomethyl-7-deazaguanine (PreQ1) at position 34 (anticodon wobble position) in tRNAs with GU(N) anticodons (tRNA-Asp, -Asn, -His and -Tyr). Catalysis occurs through a double-displacement mechanism. The nucleophile active site attacks the C1' of nucleotide 34 to detach the guanine base from the RNA, forming a covalent enzyme-RNA intermediate. The proton acceptor active site deprotonates the incoming PreQ1, allowing a nucleophilic attack on the C1' of the ribose to form the product. After dissociation, two additional enzymatic reactions on the tRNA convert PreQ1 to queuine (Q), resulting in the hypermodified nucleoside queuosine (7-(((4,5-cis-dihydroxy-2-cyclopenten-1-yl)amino)methyl)-7-deazaguanosine).</text>
</comment>
<comment type="catalytic activity">
    <reaction evidence="1">
        <text>7-aminomethyl-7-carbaguanine + guanosine(34) in tRNA = 7-aminomethyl-7-carbaguanosine(34) in tRNA + guanine</text>
        <dbReference type="Rhea" id="RHEA:24104"/>
        <dbReference type="Rhea" id="RHEA-COMP:10341"/>
        <dbReference type="Rhea" id="RHEA-COMP:10342"/>
        <dbReference type="ChEBI" id="CHEBI:16235"/>
        <dbReference type="ChEBI" id="CHEBI:58703"/>
        <dbReference type="ChEBI" id="CHEBI:74269"/>
        <dbReference type="ChEBI" id="CHEBI:82833"/>
        <dbReference type="EC" id="2.4.2.29"/>
    </reaction>
</comment>
<comment type="cofactor">
    <cofactor evidence="1">
        <name>Zn(2+)</name>
        <dbReference type="ChEBI" id="CHEBI:29105"/>
    </cofactor>
    <text evidence="1">Binds 1 zinc ion per subunit.</text>
</comment>
<comment type="pathway">
    <text evidence="1">tRNA modification; tRNA-queuosine biosynthesis.</text>
</comment>
<comment type="subunit">
    <text evidence="1">Homodimer. Within each dimer, one monomer is responsible for RNA recognition and catalysis, while the other monomer binds to the replacement base PreQ1.</text>
</comment>
<comment type="similarity">
    <text evidence="1">Belongs to the queuine tRNA-ribosyltransferase family.</text>
</comment>
<dbReference type="EC" id="2.4.2.29" evidence="1"/>
<dbReference type="EMBL" id="CP000924">
    <property type="protein sequence ID" value="ABY94672.1"/>
    <property type="molecule type" value="Genomic_DNA"/>
</dbReference>
<dbReference type="RefSeq" id="WP_003868516.1">
    <property type="nucleotide sequence ID" value="NC_010321.1"/>
</dbReference>
<dbReference type="SMR" id="B0K959"/>
<dbReference type="STRING" id="340099.Teth39_1017"/>
<dbReference type="KEGG" id="tpd:Teth39_1017"/>
<dbReference type="eggNOG" id="COG0343">
    <property type="taxonomic scope" value="Bacteria"/>
</dbReference>
<dbReference type="HOGENOM" id="CLU_022060_0_1_9"/>
<dbReference type="UniPathway" id="UPA00392"/>
<dbReference type="Proteomes" id="UP000002156">
    <property type="component" value="Chromosome"/>
</dbReference>
<dbReference type="GO" id="GO:0005829">
    <property type="term" value="C:cytosol"/>
    <property type="evidence" value="ECO:0007669"/>
    <property type="project" value="TreeGrafter"/>
</dbReference>
<dbReference type="GO" id="GO:0046872">
    <property type="term" value="F:metal ion binding"/>
    <property type="evidence" value="ECO:0007669"/>
    <property type="project" value="UniProtKB-KW"/>
</dbReference>
<dbReference type="GO" id="GO:0008479">
    <property type="term" value="F:tRNA-guanosine(34) queuine transglycosylase activity"/>
    <property type="evidence" value="ECO:0007669"/>
    <property type="project" value="UniProtKB-UniRule"/>
</dbReference>
<dbReference type="GO" id="GO:0008616">
    <property type="term" value="P:queuosine biosynthetic process"/>
    <property type="evidence" value="ECO:0007669"/>
    <property type="project" value="UniProtKB-UniRule"/>
</dbReference>
<dbReference type="GO" id="GO:0002099">
    <property type="term" value="P:tRNA wobble guanine modification"/>
    <property type="evidence" value="ECO:0007669"/>
    <property type="project" value="TreeGrafter"/>
</dbReference>
<dbReference type="GO" id="GO:0101030">
    <property type="term" value="P:tRNA-guanine transglycosylation"/>
    <property type="evidence" value="ECO:0007669"/>
    <property type="project" value="InterPro"/>
</dbReference>
<dbReference type="FunFam" id="3.20.20.105:FF:000001">
    <property type="entry name" value="Queuine tRNA-ribosyltransferase"/>
    <property type="match status" value="1"/>
</dbReference>
<dbReference type="Gene3D" id="3.20.20.105">
    <property type="entry name" value="Queuine tRNA-ribosyltransferase-like"/>
    <property type="match status" value="1"/>
</dbReference>
<dbReference type="HAMAP" id="MF_00168">
    <property type="entry name" value="Q_tRNA_Tgt"/>
    <property type="match status" value="1"/>
</dbReference>
<dbReference type="InterPro" id="IPR050076">
    <property type="entry name" value="ArchSynthase1/Queuine_TRR"/>
</dbReference>
<dbReference type="InterPro" id="IPR004803">
    <property type="entry name" value="TGT"/>
</dbReference>
<dbReference type="InterPro" id="IPR036511">
    <property type="entry name" value="TGT-like_sf"/>
</dbReference>
<dbReference type="InterPro" id="IPR002616">
    <property type="entry name" value="tRNA_ribo_trans-like"/>
</dbReference>
<dbReference type="NCBIfam" id="TIGR00430">
    <property type="entry name" value="Q_tRNA_tgt"/>
    <property type="match status" value="1"/>
</dbReference>
<dbReference type="NCBIfam" id="TIGR00449">
    <property type="entry name" value="tgt_general"/>
    <property type="match status" value="1"/>
</dbReference>
<dbReference type="PANTHER" id="PTHR46499">
    <property type="entry name" value="QUEUINE TRNA-RIBOSYLTRANSFERASE"/>
    <property type="match status" value="1"/>
</dbReference>
<dbReference type="PANTHER" id="PTHR46499:SF1">
    <property type="entry name" value="QUEUINE TRNA-RIBOSYLTRANSFERASE"/>
    <property type="match status" value="1"/>
</dbReference>
<dbReference type="Pfam" id="PF01702">
    <property type="entry name" value="TGT"/>
    <property type="match status" value="1"/>
</dbReference>
<dbReference type="SUPFAM" id="SSF51713">
    <property type="entry name" value="tRNA-guanine transglycosylase"/>
    <property type="match status" value="1"/>
</dbReference>
<keyword id="KW-0328">Glycosyltransferase</keyword>
<keyword id="KW-0479">Metal-binding</keyword>
<keyword id="KW-0671">Queuosine biosynthesis</keyword>
<keyword id="KW-1185">Reference proteome</keyword>
<keyword id="KW-0808">Transferase</keyword>
<keyword id="KW-0819">tRNA processing</keyword>
<keyword id="KW-0862">Zinc</keyword>
<reference key="1">
    <citation type="submission" date="2008-01" db="EMBL/GenBank/DDBJ databases">
        <title>Complete sequence of Thermoanaerobacter pseudethanolicus 39E.</title>
        <authorList>
            <person name="Copeland A."/>
            <person name="Lucas S."/>
            <person name="Lapidus A."/>
            <person name="Barry K."/>
            <person name="Glavina del Rio T."/>
            <person name="Dalin E."/>
            <person name="Tice H."/>
            <person name="Pitluck S."/>
            <person name="Bruce D."/>
            <person name="Goodwin L."/>
            <person name="Saunders E."/>
            <person name="Brettin T."/>
            <person name="Detter J.C."/>
            <person name="Han C."/>
            <person name="Schmutz J."/>
            <person name="Larimer F."/>
            <person name="Land M."/>
            <person name="Hauser L."/>
            <person name="Kyrpides N."/>
            <person name="Lykidis A."/>
            <person name="Hemme C."/>
            <person name="Fields M.W."/>
            <person name="He Z."/>
            <person name="Zhou J."/>
            <person name="Richardson P."/>
        </authorList>
    </citation>
    <scope>NUCLEOTIDE SEQUENCE [LARGE SCALE GENOMIC DNA]</scope>
    <source>
        <strain>ATCC 33223 / DSM 2355 / 39E</strain>
    </source>
</reference>
<name>TGT_THEP3</name>
<evidence type="ECO:0000255" key="1">
    <source>
        <dbReference type="HAMAP-Rule" id="MF_00168"/>
    </source>
</evidence>
<gene>
    <name evidence="1" type="primary">tgt</name>
    <name type="ordered locus">Teth39_1017</name>
</gene>
<protein>
    <recommendedName>
        <fullName evidence="1">Queuine tRNA-ribosyltransferase</fullName>
        <ecNumber evidence="1">2.4.2.29</ecNumber>
    </recommendedName>
    <alternativeName>
        <fullName evidence="1">Guanine insertion enzyme</fullName>
    </alternativeName>
    <alternativeName>
        <fullName evidence="1">tRNA-guanine transglycosylase</fullName>
    </alternativeName>
</protein>
<sequence length="375" mass="42980">MAAIKYRLIKKDSRTNARLGILETPHGIIETPVFMPVGTQATVKSMTPEELKEIGATIILSNTYHLYLRPGHKIIEKAGGLHKFMNWDRAILTDSGGFQVFSLNSLRKITEDGVEFRSHIDGSRHFFTPEKVIEIQNALGSDIMMSFDECAPYPADYDYVKKSMELTIKWAERGKRAHKNTEKQALFGIVQGGTYEDLRKECAQRLVDMDFPGYSIGGLSVGEPKNVMYDIVDLTTEYLPEDKPRYLMGVGSPDDLIEGVIRGVDMFDCVLPTRIARNGTVFTSKGKLIVRDAPYAEDFSPLDEECDCYTCRNYSRAYIRHLFKANEILAARLATIHNLYFLIKLMERIREAIRQDRLLEFKKQFFKKYGYKEEY</sequence>
<proteinExistence type="inferred from homology"/>